<protein>
    <recommendedName>
        <fullName evidence="1">Adenine phosphoribosyltransferase</fullName>
        <shortName evidence="1">APRT</shortName>
        <ecNumber evidence="1">2.4.2.7</ecNumber>
    </recommendedName>
</protein>
<name>APT_PARS2</name>
<gene>
    <name evidence="1" type="primary">apt</name>
    <name type="ordered locus">Franean1_5140</name>
</gene>
<proteinExistence type="inferred from homology"/>
<reference key="1">
    <citation type="journal article" date="2007" name="Genome Res.">
        <title>Genome characteristics of facultatively symbiotic Frankia sp. strains reflect host range and host plant biogeography.</title>
        <authorList>
            <person name="Normand P."/>
            <person name="Lapierre P."/>
            <person name="Tisa L.S."/>
            <person name="Gogarten J.P."/>
            <person name="Alloisio N."/>
            <person name="Bagnarol E."/>
            <person name="Bassi C.A."/>
            <person name="Berry A.M."/>
            <person name="Bickhart D.M."/>
            <person name="Choisne N."/>
            <person name="Couloux A."/>
            <person name="Cournoyer B."/>
            <person name="Cruveiller S."/>
            <person name="Daubin V."/>
            <person name="Demange N."/>
            <person name="Francino M.P."/>
            <person name="Goltsman E."/>
            <person name="Huang Y."/>
            <person name="Kopp O.R."/>
            <person name="Labarre L."/>
            <person name="Lapidus A."/>
            <person name="Lavire C."/>
            <person name="Marechal J."/>
            <person name="Martinez M."/>
            <person name="Mastronunzio J.E."/>
            <person name="Mullin B.C."/>
            <person name="Niemann J."/>
            <person name="Pujic P."/>
            <person name="Rawnsley T."/>
            <person name="Rouy Z."/>
            <person name="Schenowitz C."/>
            <person name="Sellstedt A."/>
            <person name="Tavares F."/>
            <person name="Tomkins J.P."/>
            <person name="Vallenet D."/>
            <person name="Valverde C."/>
            <person name="Wall L.G."/>
            <person name="Wang Y."/>
            <person name="Medigue C."/>
            <person name="Benson D.R."/>
        </authorList>
    </citation>
    <scope>NUCLEOTIDE SEQUENCE [LARGE SCALE GENOMIC DNA]</scope>
    <source>
        <strain>EAN1pec</strain>
    </source>
</reference>
<keyword id="KW-0963">Cytoplasm</keyword>
<keyword id="KW-0328">Glycosyltransferase</keyword>
<keyword id="KW-0660">Purine salvage</keyword>
<keyword id="KW-0808">Transferase</keyword>
<organism>
    <name type="scientific">Parafrankia sp. (strain EAN1pec)</name>
    <dbReference type="NCBI Taxonomy" id="298653"/>
    <lineage>
        <taxon>Bacteria</taxon>
        <taxon>Bacillati</taxon>
        <taxon>Actinomycetota</taxon>
        <taxon>Actinomycetes</taxon>
        <taxon>Frankiales</taxon>
        <taxon>Frankiaceae</taxon>
        <taxon>Parafrankia</taxon>
    </lineage>
</organism>
<comment type="function">
    <text evidence="1">Catalyzes a salvage reaction resulting in the formation of AMP, that is energically less costly than de novo synthesis.</text>
</comment>
<comment type="catalytic activity">
    <reaction evidence="1">
        <text>AMP + diphosphate = 5-phospho-alpha-D-ribose 1-diphosphate + adenine</text>
        <dbReference type="Rhea" id="RHEA:16609"/>
        <dbReference type="ChEBI" id="CHEBI:16708"/>
        <dbReference type="ChEBI" id="CHEBI:33019"/>
        <dbReference type="ChEBI" id="CHEBI:58017"/>
        <dbReference type="ChEBI" id="CHEBI:456215"/>
        <dbReference type="EC" id="2.4.2.7"/>
    </reaction>
</comment>
<comment type="pathway">
    <text evidence="1">Purine metabolism; AMP biosynthesis via salvage pathway; AMP from adenine: step 1/1.</text>
</comment>
<comment type="subunit">
    <text evidence="1">Homodimer.</text>
</comment>
<comment type="subcellular location">
    <subcellularLocation>
        <location evidence="1">Cytoplasm</location>
    </subcellularLocation>
</comment>
<comment type="similarity">
    <text evidence="1">Belongs to the purine/pyrimidine phosphoribosyltransferase family.</text>
</comment>
<dbReference type="EC" id="2.4.2.7" evidence="1"/>
<dbReference type="EMBL" id="CP000820">
    <property type="protein sequence ID" value="ABW14498.1"/>
    <property type="molecule type" value="Genomic_DNA"/>
</dbReference>
<dbReference type="RefSeq" id="WP_020462613.1">
    <property type="nucleotide sequence ID" value="NC_009921.1"/>
</dbReference>
<dbReference type="SMR" id="A8KZE2"/>
<dbReference type="STRING" id="298653.Franean1_5140"/>
<dbReference type="KEGG" id="fre:Franean1_5140"/>
<dbReference type="eggNOG" id="COG0503">
    <property type="taxonomic scope" value="Bacteria"/>
</dbReference>
<dbReference type="HOGENOM" id="CLU_063339_3_3_11"/>
<dbReference type="UniPathway" id="UPA00588">
    <property type="reaction ID" value="UER00646"/>
</dbReference>
<dbReference type="GO" id="GO:0005737">
    <property type="term" value="C:cytoplasm"/>
    <property type="evidence" value="ECO:0007669"/>
    <property type="project" value="UniProtKB-SubCell"/>
</dbReference>
<dbReference type="GO" id="GO:0002055">
    <property type="term" value="F:adenine binding"/>
    <property type="evidence" value="ECO:0007669"/>
    <property type="project" value="TreeGrafter"/>
</dbReference>
<dbReference type="GO" id="GO:0003999">
    <property type="term" value="F:adenine phosphoribosyltransferase activity"/>
    <property type="evidence" value="ECO:0007669"/>
    <property type="project" value="UniProtKB-UniRule"/>
</dbReference>
<dbReference type="GO" id="GO:0016208">
    <property type="term" value="F:AMP binding"/>
    <property type="evidence" value="ECO:0007669"/>
    <property type="project" value="TreeGrafter"/>
</dbReference>
<dbReference type="GO" id="GO:0006168">
    <property type="term" value="P:adenine salvage"/>
    <property type="evidence" value="ECO:0007669"/>
    <property type="project" value="InterPro"/>
</dbReference>
<dbReference type="GO" id="GO:0044209">
    <property type="term" value="P:AMP salvage"/>
    <property type="evidence" value="ECO:0007669"/>
    <property type="project" value="UniProtKB-UniRule"/>
</dbReference>
<dbReference type="GO" id="GO:0006166">
    <property type="term" value="P:purine ribonucleoside salvage"/>
    <property type="evidence" value="ECO:0007669"/>
    <property type="project" value="UniProtKB-KW"/>
</dbReference>
<dbReference type="CDD" id="cd06223">
    <property type="entry name" value="PRTases_typeI"/>
    <property type="match status" value="1"/>
</dbReference>
<dbReference type="FunFam" id="3.40.50.2020:FF:000021">
    <property type="entry name" value="Adenine phosphoribosyltransferase"/>
    <property type="match status" value="1"/>
</dbReference>
<dbReference type="Gene3D" id="3.40.50.2020">
    <property type="match status" value="1"/>
</dbReference>
<dbReference type="HAMAP" id="MF_00004">
    <property type="entry name" value="Aden_phosphoribosyltr"/>
    <property type="match status" value="1"/>
</dbReference>
<dbReference type="InterPro" id="IPR005764">
    <property type="entry name" value="Ade_phspho_trans"/>
</dbReference>
<dbReference type="InterPro" id="IPR000836">
    <property type="entry name" value="PRibTrfase_dom"/>
</dbReference>
<dbReference type="InterPro" id="IPR029057">
    <property type="entry name" value="PRTase-like"/>
</dbReference>
<dbReference type="InterPro" id="IPR050054">
    <property type="entry name" value="UPRTase/APRTase"/>
</dbReference>
<dbReference type="NCBIfam" id="TIGR01090">
    <property type="entry name" value="apt"/>
    <property type="match status" value="1"/>
</dbReference>
<dbReference type="NCBIfam" id="NF002634">
    <property type="entry name" value="PRK02304.1-3"/>
    <property type="match status" value="1"/>
</dbReference>
<dbReference type="NCBIfam" id="NF002636">
    <property type="entry name" value="PRK02304.1-5"/>
    <property type="match status" value="1"/>
</dbReference>
<dbReference type="PANTHER" id="PTHR32315">
    <property type="entry name" value="ADENINE PHOSPHORIBOSYLTRANSFERASE"/>
    <property type="match status" value="1"/>
</dbReference>
<dbReference type="PANTHER" id="PTHR32315:SF3">
    <property type="entry name" value="ADENINE PHOSPHORIBOSYLTRANSFERASE"/>
    <property type="match status" value="1"/>
</dbReference>
<dbReference type="Pfam" id="PF00156">
    <property type="entry name" value="Pribosyltran"/>
    <property type="match status" value="1"/>
</dbReference>
<dbReference type="SUPFAM" id="SSF53271">
    <property type="entry name" value="PRTase-like"/>
    <property type="match status" value="1"/>
</dbReference>
<dbReference type="PROSITE" id="PS00103">
    <property type="entry name" value="PUR_PYR_PR_TRANSFER"/>
    <property type="match status" value="1"/>
</dbReference>
<evidence type="ECO:0000255" key="1">
    <source>
        <dbReference type="HAMAP-Rule" id="MF_00004"/>
    </source>
</evidence>
<sequence>MTSVDSQPDLSAAEAVLGAHVRDVMDFPKPGVVFKDITPLLSTPAAFGVVVGALADLARGLGATTIAGIEARGFLLAAPVADRVGAGIVPIRKQGKLPGRTRSEAYALEYGTAVLEIHEDAVPTGERVLIVDDVLATGGTAAAAHTLLRGCGADVVGLAVLMELTFLSGRDRTGTLDVTSIMKI</sequence>
<feature type="chain" id="PRO_1000088974" description="Adenine phosphoribosyltransferase">
    <location>
        <begin position="1"/>
        <end position="184"/>
    </location>
</feature>
<accession>A8KZE2</accession>